<organism>
    <name type="scientific">Bacteroides fragilis (strain YCH46)</name>
    <dbReference type="NCBI Taxonomy" id="295405"/>
    <lineage>
        <taxon>Bacteria</taxon>
        <taxon>Pseudomonadati</taxon>
        <taxon>Bacteroidota</taxon>
        <taxon>Bacteroidia</taxon>
        <taxon>Bacteroidales</taxon>
        <taxon>Bacteroidaceae</taxon>
        <taxon>Bacteroides</taxon>
    </lineage>
</organism>
<gene>
    <name evidence="1" type="primary">tyrS</name>
    <name type="ordered locus">BF0068</name>
</gene>
<accession>Q650K7</accession>
<sequence>MNFVEELRWRGMVHDMMPGTEELLAKEQVTAYVGIDPTADSLHIGHLCGVMILRHFQRCGHKPLALIGGATGMIGDPSGKSAERNLLDEETLRHNQACIKKQLAKFLDFESDAPNRAELVNNYDWMKEFTFLDFAREVGKHITVNYMMAKESVKKRLNGEARDGLSFTEFTYQLLQGYDFLHLYETKGCKLQMGGSDQWGNITTGTELIRRTNGGEAYALTCPLITKADGGKFGKTESGNIWLDPRYTSPYKFYQFWLNVSDADAERYIKIFTSLDKAEIDGLVAEHNEAPHLRVLQKRLAKEVTVMVHSEEDYNAAVDASNILFGNATSDALKKLDEDTLLAVFEGVPQFEISRDALVEGVKAVDLFVDNAAVFASKGEMRKLVQGGGVSLNKEKLAAFDQVITTADLLDEKYLLVQRGKKNYYLIIAK</sequence>
<reference key="1">
    <citation type="journal article" date="2004" name="Proc. Natl. Acad. Sci. U.S.A.">
        <title>Genomic analysis of Bacteroides fragilis reveals extensive DNA inversions regulating cell surface adaptation.</title>
        <authorList>
            <person name="Kuwahara T."/>
            <person name="Yamashita A."/>
            <person name="Hirakawa H."/>
            <person name="Nakayama H."/>
            <person name="Toh H."/>
            <person name="Okada N."/>
            <person name="Kuhara S."/>
            <person name="Hattori M."/>
            <person name="Hayashi T."/>
            <person name="Ohnishi Y."/>
        </authorList>
    </citation>
    <scope>NUCLEOTIDE SEQUENCE [LARGE SCALE GENOMIC DNA]</scope>
    <source>
        <strain>YCH46</strain>
    </source>
</reference>
<proteinExistence type="inferred from homology"/>
<name>SYY_BACFR</name>
<protein>
    <recommendedName>
        <fullName evidence="1">Tyrosine--tRNA ligase</fullName>
        <ecNumber evidence="1">6.1.1.1</ecNumber>
    </recommendedName>
    <alternativeName>
        <fullName evidence="1">Tyrosyl-tRNA synthetase</fullName>
        <shortName evidence="1">TyrRS</shortName>
    </alternativeName>
</protein>
<dbReference type="EC" id="6.1.1.1" evidence="1"/>
<dbReference type="EMBL" id="AP006841">
    <property type="protein sequence ID" value="BAD46817.1"/>
    <property type="molecule type" value="Genomic_DNA"/>
</dbReference>
<dbReference type="RefSeq" id="WP_005783655.1">
    <property type="nucleotide sequence ID" value="NC_006347.1"/>
</dbReference>
<dbReference type="RefSeq" id="YP_097351.1">
    <property type="nucleotide sequence ID" value="NC_006347.1"/>
</dbReference>
<dbReference type="SMR" id="Q650K7"/>
<dbReference type="STRING" id="295405.BF0068"/>
<dbReference type="KEGG" id="bfr:BF0068"/>
<dbReference type="PATRIC" id="fig|295405.11.peg.105"/>
<dbReference type="HOGENOM" id="CLU_024003_0_3_10"/>
<dbReference type="OrthoDB" id="9804243at2"/>
<dbReference type="Proteomes" id="UP000002197">
    <property type="component" value="Chromosome"/>
</dbReference>
<dbReference type="GO" id="GO:0005829">
    <property type="term" value="C:cytosol"/>
    <property type="evidence" value="ECO:0007669"/>
    <property type="project" value="TreeGrafter"/>
</dbReference>
<dbReference type="GO" id="GO:0005524">
    <property type="term" value="F:ATP binding"/>
    <property type="evidence" value="ECO:0007669"/>
    <property type="project" value="UniProtKB-UniRule"/>
</dbReference>
<dbReference type="GO" id="GO:0003723">
    <property type="term" value="F:RNA binding"/>
    <property type="evidence" value="ECO:0007669"/>
    <property type="project" value="UniProtKB-KW"/>
</dbReference>
<dbReference type="GO" id="GO:0004831">
    <property type="term" value="F:tyrosine-tRNA ligase activity"/>
    <property type="evidence" value="ECO:0007669"/>
    <property type="project" value="UniProtKB-UniRule"/>
</dbReference>
<dbReference type="GO" id="GO:0006437">
    <property type="term" value="P:tyrosyl-tRNA aminoacylation"/>
    <property type="evidence" value="ECO:0007669"/>
    <property type="project" value="UniProtKB-UniRule"/>
</dbReference>
<dbReference type="CDD" id="cd00805">
    <property type="entry name" value="TyrRS_core"/>
    <property type="match status" value="1"/>
</dbReference>
<dbReference type="FunFam" id="1.10.240.10:FF:000001">
    <property type="entry name" value="Tyrosine--tRNA ligase"/>
    <property type="match status" value="1"/>
</dbReference>
<dbReference type="FunFam" id="3.10.290.10:FF:000014">
    <property type="entry name" value="Tyrosine--tRNA ligase"/>
    <property type="match status" value="1"/>
</dbReference>
<dbReference type="FunFam" id="3.40.50.620:FF:000008">
    <property type="entry name" value="Tyrosine--tRNA ligase"/>
    <property type="match status" value="1"/>
</dbReference>
<dbReference type="Gene3D" id="3.40.50.620">
    <property type="entry name" value="HUPs"/>
    <property type="match status" value="1"/>
</dbReference>
<dbReference type="Gene3D" id="3.10.290.10">
    <property type="entry name" value="RNA-binding S4 domain"/>
    <property type="match status" value="1"/>
</dbReference>
<dbReference type="Gene3D" id="1.10.240.10">
    <property type="entry name" value="Tyrosyl-Transfer RNA Synthetase"/>
    <property type="match status" value="1"/>
</dbReference>
<dbReference type="HAMAP" id="MF_02006">
    <property type="entry name" value="Tyr_tRNA_synth_type1"/>
    <property type="match status" value="1"/>
</dbReference>
<dbReference type="InterPro" id="IPR001412">
    <property type="entry name" value="aa-tRNA-synth_I_CS"/>
</dbReference>
<dbReference type="InterPro" id="IPR002305">
    <property type="entry name" value="aa-tRNA-synth_Ic"/>
</dbReference>
<dbReference type="InterPro" id="IPR014729">
    <property type="entry name" value="Rossmann-like_a/b/a_fold"/>
</dbReference>
<dbReference type="InterPro" id="IPR036986">
    <property type="entry name" value="S4_RNA-bd_sf"/>
</dbReference>
<dbReference type="InterPro" id="IPR054608">
    <property type="entry name" value="SYY-like_C"/>
</dbReference>
<dbReference type="InterPro" id="IPR002307">
    <property type="entry name" value="Tyr-tRNA-ligase"/>
</dbReference>
<dbReference type="InterPro" id="IPR024088">
    <property type="entry name" value="Tyr-tRNA-ligase_bac-type"/>
</dbReference>
<dbReference type="InterPro" id="IPR024107">
    <property type="entry name" value="Tyr-tRNA-ligase_bac_1"/>
</dbReference>
<dbReference type="NCBIfam" id="TIGR00234">
    <property type="entry name" value="tyrS"/>
    <property type="match status" value="1"/>
</dbReference>
<dbReference type="PANTHER" id="PTHR11766:SF0">
    <property type="entry name" value="TYROSINE--TRNA LIGASE, MITOCHONDRIAL"/>
    <property type="match status" value="1"/>
</dbReference>
<dbReference type="PANTHER" id="PTHR11766">
    <property type="entry name" value="TYROSYL-TRNA SYNTHETASE"/>
    <property type="match status" value="1"/>
</dbReference>
<dbReference type="Pfam" id="PF22421">
    <property type="entry name" value="SYY_C-terminal"/>
    <property type="match status" value="1"/>
</dbReference>
<dbReference type="Pfam" id="PF00579">
    <property type="entry name" value="tRNA-synt_1b"/>
    <property type="match status" value="1"/>
</dbReference>
<dbReference type="PRINTS" id="PR01040">
    <property type="entry name" value="TRNASYNTHTYR"/>
</dbReference>
<dbReference type="SUPFAM" id="SSF55174">
    <property type="entry name" value="Alpha-L RNA-binding motif"/>
    <property type="match status" value="1"/>
</dbReference>
<dbReference type="SUPFAM" id="SSF52374">
    <property type="entry name" value="Nucleotidylyl transferase"/>
    <property type="match status" value="1"/>
</dbReference>
<dbReference type="PROSITE" id="PS00178">
    <property type="entry name" value="AA_TRNA_LIGASE_I"/>
    <property type="match status" value="1"/>
</dbReference>
<dbReference type="PROSITE" id="PS50889">
    <property type="entry name" value="S4"/>
    <property type="match status" value="1"/>
</dbReference>
<evidence type="ECO:0000255" key="1">
    <source>
        <dbReference type="HAMAP-Rule" id="MF_02006"/>
    </source>
</evidence>
<keyword id="KW-0030">Aminoacyl-tRNA synthetase</keyword>
<keyword id="KW-0067">ATP-binding</keyword>
<keyword id="KW-0963">Cytoplasm</keyword>
<keyword id="KW-0436">Ligase</keyword>
<keyword id="KW-0547">Nucleotide-binding</keyword>
<keyword id="KW-0648">Protein biosynthesis</keyword>
<keyword id="KW-0694">RNA-binding</keyword>
<feature type="chain" id="PRO_0000234678" description="Tyrosine--tRNA ligase">
    <location>
        <begin position="1"/>
        <end position="430"/>
    </location>
</feature>
<feature type="domain" description="S4 RNA-binding" evidence="1">
    <location>
        <begin position="362"/>
        <end position="429"/>
    </location>
</feature>
<feature type="short sequence motif" description="'HIGH' region">
    <location>
        <begin position="37"/>
        <end position="46"/>
    </location>
</feature>
<feature type="short sequence motif" description="'KMSKS' region">
    <location>
        <begin position="232"/>
        <end position="236"/>
    </location>
</feature>
<feature type="binding site" evidence="1">
    <location>
        <position position="32"/>
    </location>
    <ligand>
        <name>L-tyrosine</name>
        <dbReference type="ChEBI" id="CHEBI:58315"/>
    </ligand>
</feature>
<feature type="binding site" evidence="1">
    <location>
        <position position="172"/>
    </location>
    <ligand>
        <name>L-tyrosine</name>
        <dbReference type="ChEBI" id="CHEBI:58315"/>
    </ligand>
</feature>
<feature type="binding site" evidence="1">
    <location>
        <position position="176"/>
    </location>
    <ligand>
        <name>L-tyrosine</name>
        <dbReference type="ChEBI" id="CHEBI:58315"/>
    </ligand>
</feature>
<feature type="binding site" evidence="1">
    <location>
        <position position="235"/>
    </location>
    <ligand>
        <name>ATP</name>
        <dbReference type="ChEBI" id="CHEBI:30616"/>
    </ligand>
</feature>
<comment type="function">
    <text evidence="1">Catalyzes the attachment of tyrosine to tRNA(Tyr) in a two-step reaction: tyrosine is first activated by ATP to form Tyr-AMP and then transferred to the acceptor end of tRNA(Tyr).</text>
</comment>
<comment type="catalytic activity">
    <reaction evidence="1">
        <text>tRNA(Tyr) + L-tyrosine + ATP = L-tyrosyl-tRNA(Tyr) + AMP + diphosphate + H(+)</text>
        <dbReference type="Rhea" id="RHEA:10220"/>
        <dbReference type="Rhea" id="RHEA-COMP:9706"/>
        <dbReference type="Rhea" id="RHEA-COMP:9707"/>
        <dbReference type="ChEBI" id="CHEBI:15378"/>
        <dbReference type="ChEBI" id="CHEBI:30616"/>
        <dbReference type="ChEBI" id="CHEBI:33019"/>
        <dbReference type="ChEBI" id="CHEBI:58315"/>
        <dbReference type="ChEBI" id="CHEBI:78442"/>
        <dbReference type="ChEBI" id="CHEBI:78536"/>
        <dbReference type="ChEBI" id="CHEBI:456215"/>
        <dbReference type="EC" id="6.1.1.1"/>
    </reaction>
</comment>
<comment type="subunit">
    <text evidence="1">Homodimer.</text>
</comment>
<comment type="subcellular location">
    <subcellularLocation>
        <location evidence="1">Cytoplasm</location>
    </subcellularLocation>
</comment>
<comment type="similarity">
    <text evidence="1">Belongs to the class-I aminoacyl-tRNA synthetase family. TyrS type 1 subfamily.</text>
</comment>